<accession>B0TL88</accession>
<keyword id="KW-0028">Amino-acid biosynthesis</keyword>
<keyword id="KW-0055">Arginine biosynthesis</keyword>
<keyword id="KW-0963">Cytoplasm</keyword>
<keyword id="KW-0521">NADP</keyword>
<keyword id="KW-0560">Oxidoreductase</keyword>
<dbReference type="EC" id="1.2.1.38" evidence="1"/>
<dbReference type="EMBL" id="CP000931">
    <property type="protein sequence ID" value="ABZ78633.1"/>
    <property type="molecule type" value="Genomic_DNA"/>
</dbReference>
<dbReference type="RefSeq" id="WP_012279150.1">
    <property type="nucleotide sequence ID" value="NC_010334.1"/>
</dbReference>
<dbReference type="SMR" id="B0TL88"/>
<dbReference type="STRING" id="458817.Shal_4093"/>
<dbReference type="KEGG" id="shl:Shal_4093"/>
<dbReference type="eggNOG" id="COG0002">
    <property type="taxonomic scope" value="Bacteria"/>
</dbReference>
<dbReference type="HOGENOM" id="CLU_006384_0_1_6"/>
<dbReference type="OrthoDB" id="9801289at2"/>
<dbReference type="UniPathway" id="UPA00068">
    <property type="reaction ID" value="UER00108"/>
</dbReference>
<dbReference type="Proteomes" id="UP000001317">
    <property type="component" value="Chromosome"/>
</dbReference>
<dbReference type="GO" id="GO:0005737">
    <property type="term" value="C:cytoplasm"/>
    <property type="evidence" value="ECO:0007669"/>
    <property type="project" value="UniProtKB-SubCell"/>
</dbReference>
<dbReference type="GO" id="GO:0003942">
    <property type="term" value="F:N-acetyl-gamma-glutamyl-phosphate reductase activity"/>
    <property type="evidence" value="ECO:0007669"/>
    <property type="project" value="UniProtKB-UniRule"/>
</dbReference>
<dbReference type="GO" id="GO:0051287">
    <property type="term" value="F:NAD binding"/>
    <property type="evidence" value="ECO:0007669"/>
    <property type="project" value="InterPro"/>
</dbReference>
<dbReference type="GO" id="GO:0070401">
    <property type="term" value="F:NADP+ binding"/>
    <property type="evidence" value="ECO:0007669"/>
    <property type="project" value="InterPro"/>
</dbReference>
<dbReference type="GO" id="GO:0006526">
    <property type="term" value="P:L-arginine biosynthetic process"/>
    <property type="evidence" value="ECO:0007669"/>
    <property type="project" value="UniProtKB-UniRule"/>
</dbReference>
<dbReference type="CDD" id="cd23934">
    <property type="entry name" value="AGPR_1_C"/>
    <property type="match status" value="1"/>
</dbReference>
<dbReference type="CDD" id="cd17895">
    <property type="entry name" value="AGPR_1_N"/>
    <property type="match status" value="1"/>
</dbReference>
<dbReference type="FunFam" id="3.30.360.10:FF:000014">
    <property type="entry name" value="N-acetyl-gamma-glutamyl-phosphate reductase"/>
    <property type="match status" value="1"/>
</dbReference>
<dbReference type="Gene3D" id="3.30.360.10">
    <property type="entry name" value="Dihydrodipicolinate Reductase, domain 2"/>
    <property type="match status" value="1"/>
</dbReference>
<dbReference type="Gene3D" id="3.40.50.720">
    <property type="entry name" value="NAD(P)-binding Rossmann-like Domain"/>
    <property type="match status" value="1"/>
</dbReference>
<dbReference type="HAMAP" id="MF_00150">
    <property type="entry name" value="ArgC_type1"/>
    <property type="match status" value="1"/>
</dbReference>
<dbReference type="InterPro" id="IPR023013">
    <property type="entry name" value="AGPR_AS"/>
</dbReference>
<dbReference type="InterPro" id="IPR000706">
    <property type="entry name" value="AGPR_type-1"/>
</dbReference>
<dbReference type="InterPro" id="IPR036291">
    <property type="entry name" value="NAD(P)-bd_dom_sf"/>
</dbReference>
<dbReference type="InterPro" id="IPR050085">
    <property type="entry name" value="NAGSA_dehydrogenase"/>
</dbReference>
<dbReference type="InterPro" id="IPR000534">
    <property type="entry name" value="Semialdehyde_DH_NAD-bd"/>
</dbReference>
<dbReference type="NCBIfam" id="TIGR01850">
    <property type="entry name" value="argC"/>
    <property type="match status" value="1"/>
</dbReference>
<dbReference type="PANTHER" id="PTHR32338:SF10">
    <property type="entry name" value="N-ACETYL-GAMMA-GLUTAMYL-PHOSPHATE REDUCTASE, CHLOROPLASTIC-RELATED"/>
    <property type="match status" value="1"/>
</dbReference>
<dbReference type="PANTHER" id="PTHR32338">
    <property type="entry name" value="N-ACETYL-GAMMA-GLUTAMYL-PHOSPHATE REDUCTASE, CHLOROPLASTIC-RELATED-RELATED"/>
    <property type="match status" value="1"/>
</dbReference>
<dbReference type="Pfam" id="PF01118">
    <property type="entry name" value="Semialdhyde_dh"/>
    <property type="match status" value="1"/>
</dbReference>
<dbReference type="Pfam" id="PF22698">
    <property type="entry name" value="Semialdhyde_dhC_1"/>
    <property type="match status" value="1"/>
</dbReference>
<dbReference type="SMART" id="SM00859">
    <property type="entry name" value="Semialdhyde_dh"/>
    <property type="match status" value="1"/>
</dbReference>
<dbReference type="SUPFAM" id="SSF55347">
    <property type="entry name" value="Glyceraldehyde-3-phosphate dehydrogenase-like, C-terminal domain"/>
    <property type="match status" value="1"/>
</dbReference>
<dbReference type="SUPFAM" id="SSF51735">
    <property type="entry name" value="NAD(P)-binding Rossmann-fold domains"/>
    <property type="match status" value="1"/>
</dbReference>
<dbReference type="PROSITE" id="PS01224">
    <property type="entry name" value="ARGC"/>
    <property type="match status" value="1"/>
</dbReference>
<reference key="1">
    <citation type="submission" date="2008-01" db="EMBL/GenBank/DDBJ databases">
        <title>Complete sequence of Shewanella halifaxensis HAW-EB4.</title>
        <authorList>
            <consortium name="US DOE Joint Genome Institute"/>
            <person name="Copeland A."/>
            <person name="Lucas S."/>
            <person name="Lapidus A."/>
            <person name="Glavina del Rio T."/>
            <person name="Dalin E."/>
            <person name="Tice H."/>
            <person name="Bruce D."/>
            <person name="Goodwin L."/>
            <person name="Pitluck S."/>
            <person name="Sims D."/>
            <person name="Brettin T."/>
            <person name="Detter J.C."/>
            <person name="Han C."/>
            <person name="Kuske C.R."/>
            <person name="Schmutz J."/>
            <person name="Larimer F."/>
            <person name="Land M."/>
            <person name="Hauser L."/>
            <person name="Kyrpides N."/>
            <person name="Kim E."/>
            <person name="Zhao J.-S."/>
            <person name="Richardson P."/>
        </authorList>
    </citation>
    <scope>NUCLEOTIDE SEQUENCE [LARGE SCALE GENOMIC DNA]</scope>
    <source>
        <strain>HAW-EB4</strain>
    </source>
</reference>
<sequence>MKNIAIIGASGYTGAQISSLINAESTMSIQGLYVSENSLDKGKALSDLYPAYSHIDLCLTPLTDDAKQTIVATADAVVLATDHGVSLHLAAWFYQQGLAVFDLSGAYRFSDVAQYPKWYGFTHEYSQVLADAVYGLAEWNAPQIATSKMIAVPGCYPTASLIALKPVAHLLTDILPVINAVSGVTGAGRKAQLHTSFCEVSLTPYGVLGHRHQPEIATQLGQEVIFTPHLGNFKRGILATITVQLAAGTTASDIEKAYQCYDSAELITVKQNQFPKVDDVVQTANCHLGWKFDEQSGYLVIASAIDNLMKGAASQALQCIKIHFNASVNH</sequence>
<feature type="chain" id="PRO_1000076744" description="N-acetyl-gamma-glutamyl-phosphate reductase">
    <location>
        <begin position="1"/>
        <end position="330"/>
    </location>
</feature>
<feature type="active site" evidence="1">
    <location>
        <position position="155"/>
    </location>
</feature>
<proteinExistence type="inferred from homology"/>
<organism>
    <name type="scientific">Shewanella halifaxensis (strain HAW-EB4)</name>
    <dbReference type="NCBI Taxonomy" id="458817"/>
    <lineage>
        <taxon>Bacteria</taxon>
        <taxon>Pseudomonadati</taxon>
        <taxon>Pseudomonadota</taxon>
        <taxon>Gammaproteobacteria</taxon>
        <taxon>Alteromonadales</taxon>
        <taxon>Shewanellaceae</taxon>
        <taxon>Shewanella</taxon>
    </lineage>
</organism>
<gene>
    <name evidence="1" type="primary">argC</name>
    <name type="ordered locus">Shal_4093</name>
</gene>
<comment type="function">
    <text evidence="1">Catalyzes the NADPH-dependent reduction of N-acetyl-5-glutamyl phosphate to yield N-acetyl-L-glutamate 5-semialdehyde.</text>
</comment>
<comment type="catalytic activity">
    <reaction evidence="1">
        <text>N-acetyl-L-glutamate 5-semialdehyde + phosphate + NADP(+) = N-acetyl-L-glutamyl 5-phosphate + NADPH + H(+)</text>
        <dbReference type="Rhea" id="RHEA:21588"/>
        <dbReference type="ChEBI" id="CHEBI:15378"/>
        <dbReference type="ChEBI" id="CHEBI:29123"/>
        <dbReference type="ChEBI" id="CHEBI:43474"/>
        <dbReference type="ChEBI" id="CHEBI:57783"/>
        <dbReference type="ChEBI" id="CHEBI:57936"/>
        <dbReference type="ChEBI" id="CHEBI:58349"/>
        <dbReference type="EC" id="1.2.1.38"/>
    </reaction>
</comment>
<comment type="pathway">
    <text evidence="1">Amino-acid biosynthesis; L-arginine biosynthesis; N(2)-acetyl-L-ornithine from L-glutamate: step 3/4.</text>
</comment>
<comment type="subcellular location">
    <subcellularLocation>
        <location evidence="1">Cytoplasm</location>
    </subcellularLocation>
</comment>
<comment type="similarity">
    <text evidence="1">Belongs to the NAGSA dehydrogenase family. Type 1 subfamily.</text>
</comment>
<name>ARGC_SHEHH</name>
<protein>
    <recommendedName>
        <fullName evidence="1">N-acetyl-gamma-glutamyl-phosphate reductase</fullName>
        <shortName evidence="1">AGPR</shortName>
        <ecNumber evidence="1">1.2.1.38</ecNumber>
    </recommendedName>
    <alternativeName>
        <fullName evidence="1">N-acetyl-glutamate semialdehyde dehydrogenase</fullName>
        <shortName evidence="1">NAGSA dehydrogenase</shortName>
    </alternativeName>
</protein>
<evidence type="ECO:0000255" key="1">
    <source>
        <dbReference type="HAMAP-Rule" id="MF_00150"/>
    </source>
</evidence>